<comment type="function">
    <text evidence="3 4 5 6">Peroxisomal 2-OH acyl-CoA lyase involved in the cleavage (C1 removal) reaction in the fatty acid alpha-oxydation in a thiamine pyrophosphate (TPP)-dependent manner (PubMed:10468558, PubMed:21708296, PubMed:28289220). Involved in the degradation of 3-methyl-branched fatty acids like phytanic acid and the shortening of 2-hydroxy long-chain fatty acids (PubMed:10468558, PubMed:21708296, PubMed:28289220). Plays a significant role in the biosynthesis of heptadecanal in the liver (By similarity).</text>
</comment>
<comment type="catalytic activity">
    <reaction evidence="4 5">
        <text>a 2-hydroxy-3-methyl fatty acyl-CoA = a 2-methyl-branched fatty aldehyde + formyl-CoA</text>
        <dbReference type="Rhea" id="RHEA:25375"/>
        <dbReference type="ChEBI" id="CHEBI:49188"/>
        <dbReference type="ChEBI" id="CHEBI:57376"/>
        <dbReference type="ChEBI" id="CHEBI:58783"/>
        <dbReference type="EC" id="4.1.2.63"/>
    </reaction>
    <physiologicalReaction direction="left-to-right" evidence="10">
        <dbReference type="Rhea" id="RHEA:25376"/>
    </physiologicalReaction>
</comment>
<comment type="catalytic activity">
    <reaction evidence="6">
        <text>an (R)-2-hydroxy-long-chain-fatty acyl-CoA = a long-chain fatty aldehyde + formyl-CoA</text>
        <dbReference type="Rhea" id="RHEA:67444"/>
        <dbReference type="ChEBI" id="CHEBI:17176"/>
        <dbReference type="ChEBI" id="CHEBI:57376"/>
        <dbReference type="ChEBI" id="CHEBI:170012"/>
        <dbReference type="EC" id="4.1.2.63"/>
    </reaction>
    <physiologicalReaction direction="left-to-right" evidence="11">
        <dbReference type="Rhea" id="RHEA:67445"/>
    </physiologicalReaction>
</comment>
<comment type="catalytic activity">
    <reaction evidence="4 5">
        <text>2-hydroxy-3-methylhexadecanoyl-CoA = 2-methylpentadecanal + formyl-CoA</text>
        <dbReference type="Rhea" id="RHEA:25379"/>
        <dbReference type="ChEBI" id="CHEBI:49190"/>
        <dbReference type="ChEBI" id="CHEBI:57376"/>
        <dbReference type="ChEBI" id="CHEBI:58784"/>
    </reaction>
    <physiologicalReaction direction="left-to-right" evidence="10">
        <dbReference type="Rhea" id="RHEA:25380"/>
    </physiologicalReaction>
</comment>
<comment type="catalytic activity">
    <reaction evidence="6">
        <text>2-hydroxyoctadecanoyl-CoA = heptadecanal + formyl-CoA</text>
        <dbReference type="Rhea" id="RHEA:55196"/>
        <dbReference type="ChEBI" id="CHEBI:57376"/>
        <dbReference type="ChEBI" id="CHEBI:74116"/>
        <dbReference type="ChEBI" id="CHEBI:138631"/>
    </reaction>
    <physiologicalReaction direction="left-to-right" evidence="11">
        <dbReference type="Rhea" id="RHEA:55197"/>
    </physiologicalReaction>
</comment>
<comment type="catalytic activity">
    <reaction evidence="6">
        <text>2-hydroxyphytanoyl-CoA = 2,6,10,14-tetramethylpentadecanal + formyl-CoA</text>
        <dbReference type="Rhea" id="RHEA:25355"/>
        <dbReference type="ChEBI" id="CHEBI:49189"/>
        <dbReference type="ChEBI" id="CHEBI:57334"/>
        <dbReference type="ChEBI" id="CHEBI:57376"/>
    </reaction>
    <physiologicalReaction direction="left-to-right" evidence="11">
        <dbReference type="Rhea" id="RHEA:25356"/>
    </physiologicalReaction>
</comment>
<comment type="cofactor">
    <cofactor evidence="2">
        <name>Mg(2+)</name>
        <dbReference type="ChEBI" id="CHEBI:18420"/>
    </cofactor>
    <text evidence="2">Binds 1 Mg(2+) ion per subunit.</text>
</comment>
<comment type="cofactor">
    <cofactor evidence="2">
        <name>thiamine diphosphate</name>
        <dbReference type="ChEBI" id="CHEBI:58937"/>
    </cofactor>
    <text evidence="2">Binds 1 thiamine pyrophosphate per subunit.</text>
</comment>
<comment type="pathway">
    <text>Lipid metabolism; fatty acid metabolism.</text>
</comment>
<comment type="subunit">
    <text evidence="5">Homotetramer.</text>
</comment>
<comment type="interaction">
    <interactant intactId="EBI-746580">
        <id>Q9UJ83</id>
    </interactant>
    <interactant intactId="EBI-746580">
        <id>Q9UJ83</id>
        <label>HACL1</label>
    </interactant>
    <organismsDiffer>false</organismsDiffer>
    <experiments>3</experiments>
</comment>
<comment type="interaction">
    <interactant intactId="EBI-746580">
        <id>Q9UJ83</id>
    </interactant>
    <interactant intactId="EBI-6447163">
        <id>Q8N7X4</id>
        <label>MAGEB6</label>
    </interactant>
    <organismsDiffer>false</organismsDiffer>
    <experiments>3</experiments>
</comment>
<comment type="interaction">
    <interactant intactId="EBI-746580">
        <id>Q9UJ83</id>
    </interactant>
    <interactant intactId="EBI-746595">
        <id>Q96E35</id>
        <label>ZMYND19</label>
    </interactant>
    <organismsDiffer>false</organismsDiffer>
    <experiments>7</experiments>
</comment>
<comment type="subcellular location">
    <subcellularLocation>
        <location evidence="4 5 6">Peroxisome</location>
    </subcellularLocation>
</comment>
<comment type="alternative products">
    <event type="alternative splicing"/>
    <isoform>
        <id>Q9UJ83-1</id>
        <name>1</name>
        <sequence type="displayed"/>
    </isoform>
    <isoform>
        <id>Q9UJ83-2</id>
        <name>2</name>
        <sequence type="described" ref="VSP_054191"/>
    </isoform>
    <isoform>
        <id>Q9UJ83-4</id>
        <name>4</name>
        <sequence type="described" ref="VSP_054749 VSP_054750"/>
    </isoform>
    <isoform>
        <id>Q9UJ83-3</id>
        <name>3</name>
        <sequence type="described" ref="VSP_054192"/>
    </isoform>
</comment>
<comment type="tissue specificity">
    <text evidence="4 6">Widely expressed.</text>
</comment>
<comment type="similarity">
    <text evidence="9">Belongs to the TPP enzyme family.</text>
</comment>
<comment type="sequence caution" evidence="9">
    <conflict type="erroneous initiation">
        <sequence resource="EMBL-CDS" id="AAF28957"/>
    </conflict>
    <text>Extended N-terminus.</text>
</comment>
<proteinExistence type="evidence at protein level"/>
<protein>
    <recommendedName>
        <fullName>2-hydroxyacyl-CoA lyase 1</fullName>
        <ecNumber evidence="4 5 6">4.1.2.63</ecNumber>
    </recommendedName>
    <alternativeName>
        <fullName evidence="7">2-hydroxyphytanoyl-CoA lyase</fullName>
        <shortName evidence="7">2-HPCL</shortName>
    </alternativeName>
    <alternativeName>
        <fullName>Phytanoyl-CoA 2-hydroxylase 2</fullName>
    </alternativeName>
</protein>
<gene>
    <name evidence="12" type="primary">HACL1</name>
    <name type="synonym">HPCL</name>
    <name type="synonym">HPCL2</name>
    <name type="synonym">PHYH2</name>
    <name type="ORF">HSPC279</name>
</gene>
<organism>
    <name type="scientific">Homo sapiens</name>
    <name type="common">Human</name>
    <dbReference type="NCBI Taxonomy" id="9606"/>
    <lineage>
        <taxon>Eukaryota</taxon>
        <taxon>Metazoa</taxon>
        <taxon>Chordata</taxon>
        <taxon>Craniata</taxon>
        <taxon>Vertebrata</taxon>
        <taxon>Euteleostomi</taxon>
        <taxon>Mammalia</taxon>
        <taxon>Eutheria</taxon>
        <taxon>Euarchontoglires</taxon>
        <taxon>Primates</taxon>
        <taxon>Haplorrhini</taxon>
        <taxon>Catarrhini</taxon>
        <taxon>Hominidae</taxon>
        <taxon>Homo</taxon>
    </lineage>
</organism>
<evidence type="ECO:0000250" key="1">
    <source>
        <dbReference type="UniProtKB" id="P40149"/>
    </source>
</evidence>
<evidence type="ECO:0000250" key="2">
    <source>
        <dbReference type="UniProtKB" id="Q8CHM7"/>
    </source>
</evidence>
<evidence type="ECO:0000250" key="3">
    <source>
        <dbReference type="UniProtKB" id="Q9QXE0"/>
    </source>
</evidence>
<evidence type="ECO:0000269" key="4">
    <source>
    </source>
</evidence>
<evidence type="ECO:0000269" key="5">
    <source>
    </source>
</evidence>
<evidence type="ECO:0000269" key="6">
    <source>
    </source>
</evidence>
<evidence type="ECO:0000303" key="7">
    <source>
    </source>
</evidence>
<evidence type="ECO:0000303" key="8">
    <source>
    </source>
</evidence>
<evidence type="ECO:0000305" key="9"/>
<evidence type="ECO:0000305" key="10">
    <source>
    </source>
</evidence>
<evidence type="ECO:0000305" key="11">
    <source>
    </source>
</evidence>
<evidence type="ECO:0000312" key="12">
    <source>
        <dbReference type="HGNC" id="HGNC:17856"/>
    </source>
</evidence>
<evidence type="ECO:0007744" key="13">
    <source>
    </source>
</evidence>
<name>HACL1_HUMAN</name>
<feature type="chain" id="PRO_0000090816" description="2-hydroxyacyl-CoA lyase 1">
    <location>
        <begin position="1"/>
        <end position="578"/>
    </location>
</feature>
<feature type="region of interest" description="Thiamine pyrophosphate binding" evidence="1">
    <location>
        <begin position="401"/>
        <end position="486"/>
    </location>
</feature>
<feature type="short sequence motif" description="Microbody targeting signal" evidence="4">
    <location>
        <begin position="576"/>
        <end position="578"/>
    </location>
</feature>
<feature type="binding site" evidence="1">
    <location>
        <position position="60"/>
    </location>
    <ligand>
        <name>thiamine diphosphate</name>
        <dbReference type="ChEBI" id="CHEBI:58937"/>
    </ligand>
</feature>
<feature type="binding site" evidence="1">
    <location>
        <position position="455"/>
    </location>
    <ligand>
        <name>Mg(2+)</name>
        <dbReference type="ChEBI" id="CHEBI:18420"/>
    </ligand>
</feature>
<feature type="binding site" evidence="1">
    <location>
        <position position="482"/>
    </location>
    <ligand>
        <name>Mg(2+)</name>
        <dbReference type="ChEBI" id="CHEBI:18420"/>
    </ligand>
</feature>
<feature type="modified residue" description="Phosphoserine" evidence="13">
    <location>
        <position position="4"/>
    </location>
</feature>
<feature type="modified residue" description="N6-succinyllysine" evidence="3">
    <location>
        <position position="351"/>
    </location>
</feature>
<feature type="modified residue" description="N6-succinyllysine" evidence="3">
    <location>
        <position position="358"/>
    </location>
</feature>
<feature type="modified residue" description="N6-succinyllysine" evidence="3">
    <location>
        <position position="365"/>
    </location>
</feature>
<feature type="splice variant" id="VSP_054191" description="In isoform 2." evidence="8">
    <location>
        <begin position="77"/>
        <end position="103"/>
    </location>
</feature>
<feature type="splice variant" id="VSP_054192" description="In isoform 3." evidence="8">
    <location>
        <begin position="104"/>
        <end position="185"/>
    </location>
</feature>
<feature type="splice variant" id="VSP_054749" description="In isoform 4." evidence="9">
    <location>
        <begin position="128"/>
        <end position="153"/>
    </location>
</feature>
<feature type="splice variant" id="VSP_054750" description="In isoform 4." evidence="9">
    <location>
        <begin position="332"/>
        <end position="365"/>
    </location>
</feature>
<feature type="mutagenesis site" description="Does not affect subcellular localization. Abolishes lyase activity. Does not affect subcellular localization, abolishes lyase activity, does not affect oligomerisation and does not bind TTP; when associated with S-456." evidence="5">
    <original>D</original>
    <variation>S</variation>
    <variation>R</variation>
    <location>
        <position position="455"/>
    </location>
</feature>
<feature type="mutagenesis site" description="Does not affect subcellular localization. Abolishes lyase activity. Does not affect subcellular localization, abolishes lyase activity, does not affect oligomerisation and does not bind TTP; when associated with S-455." evidence="5">
    <original>S</original>
    <variation>R</variation>
    <location>
        <position position="456"/>
    </location>
</feature>
<feature type="sequence conflict" description="In Ref. 1; CAB60200." evidence="9" ref="1">
    <original>Q</original>
    <variation>H</variation>
    <location>
        <position position="447"/>
    </location>
</feature>
<feature type="sequence conflict" description="In Ref. 1; CAB60200." evidence="9" ref="1">
    <original>R</original>
    <variation>E</variation>
    <location>
        <position position="543"/>
    </location>
</feature>
<reference key="1">
    <citation type="journal article" date="1999" name="Proc. Natl. Acad. Sci. U.S.A.">
        <title>Purification, molecular cloning, and expression of 2-hydroxyphytanoyl-CoA lyase, a peroxisomal thiamine hydrophosphate-dependent enzyme that catalyzes the carbon-carbon bond cleavage during alpha-oxidation of 3-methyl-branched fatty acids.</title>
        <authorList>
            <person name="Foulon V."/>
            <person name="Antonenkov V.D."/>
            <person name="Croes K."/>
            <person name="Waelkens E."/>
            <person name="Mannaerts G.P."/>
            <person name="Van Veldhoven P.P."/>
            <person name="Casteels M."/>
        </authorList>
    </citation>
    <scope>NUCLEOTIDE SEQUENCE [MRNA] (ISOFORM 1)</scope>
    <scope>TISSUE SPECIFICITY</scope>
    <scope>CATALYTIC ACTIVITY</scope>
    <scope>FUNCTION</scope>
    <scope>SUBCELLULAR LOCATION</scope>
</reference>
<reference key="2">
    <citation type="journal article" date="2000" name="Genome Res.">
        <title>Cloning and functional analysis of cDNAs with open reading frames for 300 previously undefined genes expressed in CD34+ hematopoietic stem/progenitor cells.</title>
        <authorList>
            <person name="Zhang Q.-H."/>
            <person name="Ye M."/>
            <person name="Wu X.-Y."/>
            <person name="Ren S.-X."/>
            <person name="Zhao M."/>
            <person name="Zhao C.-J."/>
            <person name="Fu G."/>
            <person name="Shen Y."/>
            <person name="Fan H.-Y."/>
            <person name="Lu G."/>
            <person name="Zhong M."/>
            <person name="Xu X.-R."/>
            <person name="Han Z.-G."/>
            <person name="Zhang J.-W."/>
            <person name="Tao J."/>
            <person name="Huang Q.-H."/>
            <person name="Zhou J."/>
            <person name="Hu G.-X."/>
            <person name="Gu J."/>
            <person name="Chen S.-J."/>
            <person name="Chen Z."/>
        </authorList>
    </citation>
    <scope>NUCLEOTIDE SEQUENCE [LARGE SCALE MRNA] (ISOFORM 1)</scope>
    <source>
        <tissue>Umbilical cord blood</tissue>
    </source>
</reference>
<reference key="3">
    <citation type="journal article" date="2004" name="Nat. Genet.">
        <title>Complete sequencing and characterization of 21,243 full-length human cDNAs.</title>
        <authorList>
            <person name="Ota T."/>
            <person name="Suzuki Y."/>
            <person name="Nishikawa T."/>
            <person name="Otsuki T."/>
            <person name="Sugiyama T."/>
            <person name="Irie R."/>
            <person name="Wakamatsu A."/>
            <person name="Hayashi K."/>
            <person name="Sato H."/>
            <person name="Nagai K."/>
            <person name="Kimura K."/>
            <person name="Makita H."/>
            <person name="Sekine M."/>
            <person name="Obayashi M."/>
            <person name="Nishi T."/>
            <person name="Shibahara T."/>
            <person name="Tanaka T."/>
            <person name="Ishii S."/>
            <person name="Yamamoto J."/>
            <person name="Saito K."/>
            <person name="Kawai Y."/>
            <person name="Isono Y."/>
            <person name="Nakamura Y."/>
            <person name="Nagahari K."/>
            <person name="Murakami K."/>
            <person name="Yasuda T."/>
            <person name="Iwayanagi T."/>
            <person name="Wagatsuma M."/>
            <person name="Shiratori A."/>
            <person name="Sudo H."/>
            <person name="Hosoiri T."/>
            <person name="Kaku Y."/>
            <person name="Kodaira H."/>
            <person name="Kondo H."/>
            <person name="Sugawara M."/>
            <person name="Takahashi M."/>
            <person name="Kanda K."/>
            <person name="Yokoi T."/>
            <person name="Furuya T."/>
            <person name="Kikkawa E."/>
            <person name="Omura Y."/>
            <person name="Abe K."/>
            <person name="Kamihara K."/>
            <person name="Katsuta N."/>
            <person name="Sato K."/>
            <person name="Tanikawa M."/>
            <person name="Yamazaki M."/>
            <person name="Ninomiya K."/>
            <person name="Ishibashi T."/>
            <person name="Yamashita H."/>
            <person name="Murakawa K."/>
            <person name="Fujimori K."/>
            <person name="Tanai H."/>
            <person name="Kimata M."/>
            <person name="Watanabe M."/>
            <person name="Hiraoka S."/>
            <person name="Chiba Y."/>
            <person name="Ishida S."/>
            <person name="Ono Y."/>
            <person name="Takiguchi S."/>
            <person name="Watanabe S."/>
            <person name="Yosida M."/>
            <person name="Hotuta T."/>
            <person name="Kusano J."/>
            <person name="Kanehori K."/>
            <person name="Takahashi-Fujii A."/>
            <person name="Hara H."/>
            <person name="Tanase T.-O."/>
            <person name="Nomura Y."/>
            <person name="Togiya S."/>
            <person name="Komai F."/>
            <person name="Hara R."/>
            <person name="Takeuchi K."/>
            <person name="Arita M."/>
            <person name="Imose N."/>
            <person name="Musashino K."/>
            <person name="Yuuki H."/>
            <person name="Oshima A."/>
            <person name="Sasaki N."/>
            <person name="Aotsuka S."/>
            <person name="Yoshikawa Y."/>
            <person name="Matsunawa H."/>
            <person name="Ichihara T."/>
            <person name="Shiohata N."/>
            <person name="Sano S."/>
            <person name="Moriya S."/>
            <person name="Momiyama H."/>
            <person name="Satoh N."/>
            <person name="Takami S."/>
            <person name="Terashima Y."/>
            <person name="Suzuki O."/>
            <person name="Nakagawa S."/>
            <person name="Senoh A."/>
            <person name="Mizoguchi H."/>
            <person name="Goto Y."/>
            <person name="Shimizu F."/>
            <person name="Wakebe H."/>
            <person name="Hishigaki H."/>
            <person name="Watanabe T."/>
            <person name="Sugiyama A."/>
            <person name="Takemoto M."/>
            <person name="Kawakami B."/>
            <person name="Yamazaki M."/>
            <person name="Watanabe K."/>
            <person name="Kumagai A."/>
            <person name="Itakura S."/>
            <person name="Fukuzumi Y."/>
            <person name="Fujimori Y."/>
            <person name="Komiyama M."/>
            <person name="Tashiro H."/>
            <person name="Tanigami A."/>
            <person name="Fujiwara T."/>
            <person name="Ono T."/>
            <person name="Yamada K."/>
            <person name="Fujii Y."/>
            <person name="Ozaki K."/>
            <person name="Hirao M."/>
            <person name="Ohmori Y."/>
            <person name="Kawabata A."/>
            <person name="Hikiji T."/>
            <person name="Kobatake N."/>
            <person name="Inagaki H."/>
            <person name="Ikema Y."/>
            <person name="Okamoto S."/>
            <person name="Okitani R."/>
            <person name="Kawakami T."/>
            <person name="Noguchi S."/>
            <person name="Itoh T."/>
            <person name="Shigeta K."/>
            <person name="Senba T."/>
            <person name="Matsumura K."/>
            <person name="Nakajima Y."/>
            <person name="Mizuno T."/>
            <person name="Morinaga M."/>
            <person name="Sasaki M."/>
            <person name="Togashi T."/>
            <person name="Oyama M."/>
            <person name="Hata H."/>
            <person name="Watanabe M."/>
            <person name="Komatsu T."/>
            <person name="Mizushima-Sugano J."/>
            <person name="Satoh T."/>
            <person name="Shirai Y."/>
            <person name="Takahashi Y."/>
            <person name="Nakagawa K."/>
            <person name="Okumura K."/>
            <person name="Nagase T."/>
            <person name="Nomura N."/>
            <person name="Kikuchi H."/>
            <person name="Masuho Y."/>
            <person name="Yamashita R."/>
            <person name="Nakai K."/>
            <person name="Yada T."/>
            <person name="Nakamura Y."/>
            <person name="Ohara O."/>
            <person name="Isogai T."/>
            <person name="Sugano S."/>
        </authorList>
    </citation>
    <scope>NUCLEOTIDE SEQUENCE [LARGE SCALE MRNA] (ISOFORMS 2 AND 3)</scope>
    <source>
        <tissue>Mammary gland</tissue>
        <tissue>Testis</tissue>
    </source>
</reference>
<reference key="4">
    <citation type="journal article" date="2006" name="Nature">
        <title>The DNA sequence, annotation and analysis of human chromosome 3.</title>
        <authorList>
            <person name="Muzny D.M."/>
            <person name="Scherer S.E."/>
            <person name="Kaul R."/>
            <person name="Wang J."/>
            <person name="Yu J."/>
            <person name="Sudbrak R."/>
            <person name="Buhay C.J."/>
            <person name="Chen R."/>
            <person name="Cree A."/>
            <person name="Ding Y."/>
            <person name="Dugan-Rocha S."/>
            <person name="Gill R."/>
            <person name="Gunaratne P."/>
            <person name="Harris R.A."/>
            <person name="Hawes A.C."/>
            <person name="Hernandez J."/>
            <person name="Hodgson A.V."/>
            <person name="Hume J."/>
            <person name="Jackson A."/>
            <person name="Khan Z.M."/>
            <person name="Kovar-Smith C."/>
            <person name="Lewis L.R."/>
            <person name="Lozado R.J."/>
            <person name="Metzker M.L."/>
            <person name="Milosavljevic A."/>
            <person name="Miner G.R."/>
            <person name="Morgan M.B."/>
            <person name="Nazareth L.V."/>
            <person name="Scott G."/>
            <person name="Sodergren E."/>
            <person name="Song X.-Z."/>
            <person name="Steffen D."/>
            <person name="Wei S."/>
            <person name="Wheeler D.A."/>
            <person name="Wright M.W."/>
            <person name="Worley K.C."/>
            <person name="Yuan Y."/>
            <person name="Zhang Z."/>
            <person name="Adams C.Q."/>
            <person name="Ansari-Lari M.A."/>
            <person name="Ayele M."/>
            <person name="Brown M.J."/>
            <person name="Chen G."/>
            <person name="Chen Z."/>
            <person name="Clendenning J."/>
            <person name="Clerc-Blankenburg K.P."/>
            <person name="Chen R."/>
            <person name="Chen Z."/>
            <person name="Davis C."/>
            <person name="Delgado O."/>
            <person name="Dinh H.H."/>
            <person name="Dong W."/>
            <person name="Draper H."/>
            <person name="Ernst S."/>
            <person name="Fu G."/>
            <person name="Gonzalez-Garay M.L."/>
            <person name="Garcia D.K."/>
            <person name="Gillett W."/>
            <person name="Gu J."/>
            <person name="Hao B."/>
            <person name="Haugen E."/>
            <person name="Havlak P."/>
            <person name="He X."/>
            <person name="Hennig S."/>
            <person name="Hu S."/>
            <person name="Huang W."/>
            <person name="Jackson L.R."/>
            <person name="Jacob L.S."/>
            <person name="Kelly S.H."/>
            <person name="Kube M."/>
            <person name="Levy R."/>
            <person name="Li Z."/>
            <person name="Liu B."/>
            <person name="Liu J."/>
            <person name="Liu W."/>
            <person name="Lu J."/>
            <person name="Maheshwari M."/>
            <person name="Nguyen B.-V."/>
            <person name="Okwuonu G.O."/>
            <person name="Palmeiri A."/>
            <person name="Pasternak S."/>
            <person name="Perez L.M."/>
            <person name="Phelps K.A."/>
            <person name="Plopper F.J."/>
            <person name="Qiang B."/>
            <person name="Raymond C."/>
            <person name="Rodriguez R."/>
            <person name="Saenphimmachak C."/>
            <person name="Santibanez J."/>
            <person name="Shen H."/>
            <person name="Shen Y."/>
            <person name="Subramanian S."/>
            <person name="Tabor P.E."/>
            <person name="Verduzco D."/>
            <person name="Waldron L."/>
            <person name="Wang J."/>
            <person name="Wang J."/>
            <person name="Wang Q."/>
            <person name="Williams G.A."/>
            <person name="Wong G.K.-S."/>
            <person name="Yao Z."/>
            <person name="Zhang J."/>
            <person name="Zhang X."/>
            <person name="Zhao G."/>
            <person name="Zhou J."/>
            <person name="Zhou Y."/>
            <person name="Nelson D."/>
            <person name="Lehrach H."/>
            <person name="Reinhardt R."/>
            <person name="Naylor S.L."/>
            <person name="Yang H."/>
            <person name="Olson M."/>
            <person name="Weinstock G."/>
            <person name="Gibbs R.A."/>
        </authorList>
    </citation>
    <scope>NUCLEOTIDE SEQUENCE [LARGE SCALE GENOMIC DNA]</scope>
</reference>
<reference key="5">
    <citation type="journal article" date="2004" name="Genome Res.">
        <title>The status, quality, and expansion of the NIH full-length cDNA project: the Mammalian Gene Collection (MGC).</title>
        <authorList>
            <consortium name="The MGC Project Team"/>
        </authorList>
    </citation>
    <scope>NUCLEOTIDE SEQUENCE [LARGE SCALE MRNA] (ISOFORM 1)</scope>
    <source>
        <tissue>Lung</tissue>
    </source>
</reference>
<reference key="6">
    <citation type="journal article" date="2009" name="Anal. Chem.">
        <title>Lys-N and trypsin cover complementary parts of the phosphoproteome in a refined SCX-based approach.</title>
        <authorList>
            <person name="Gauci S."/>
            <person name="Helbig A.O."/>
            <person name="Slijper M."/>
            <person name="Krijgsveld J."/>
            <person name="Heck A.J."/>
            <person name="Mohammed S."/>
        </authorList>
    </citation>
    <scope>IDENTIFICATION BY MASS SPECTROMETRY [LARGE SCALE ANALYSIS]</scope>
</reference>
<reference key="7">
    <citation type="journal article" date="2011" name="Biochim. Biophys. Acta">
        <title>Role of thiamine pyrophosphate in oligomerisation, functioning and import of peroxisomal 2-hydroxyacyl-CoA lyase.</title>
        <authorList>
            <person name="Fraccascia P."/>
            <person name="Casteels M."/>
            <person name="De Schryver E."/>
            <person name="Van Veldhoven P.P."/>
        </authorList>
    </citation>
    <scope>SUBCELLULAR LOCATION</scope>
    <scope>MUTAGENESIS OF ASP-455 AND SER-456</scope>
    <scope>SUBUNIT</scope>
    <scope>CATALYTIC ACTIVITY</scope>
</reference>
<reference key="8">
    <citation type="journal article" date="2011" name="BMC Syst. Biol.">
        <title>Initial characterization of the human central proteome.</title>
        <authorList>
            <person name="Burkard T.R."/>
            <person name="Planyavsky M."/>
            <person name="Kaupe I."/>
            <person name="Breitwieser F.P."/>
            <person name="Buerckstuemmer T."/>
            <person name="Bennett K.L."/>
            <person name="Superti-Furga G."/>
            <person name="Colinge J."/>
        </authorList>
    </citation>
    <scope>IDENTIFICATION BY MASS SPECTROMETRY [LARGE SCALE ANALYSIS]</scope>
</reference>
<reference key="9">
    <citation type="journal article" date="2012" name="Proc. Natl. Acad. Sci. U.S.A.">
        <title>N-terminal acetylome analyses and functional insights of the N-terminal acetyltransferase NatB.</title>
        <authorList>
            <person name="Van Damme P."/>
            <person name="Lasa M."/>
            <person name="Polevoda B."/>
            <person name="Gazquez C."/>
            <person name="Elosegui-Artola A."/>
            <person name="Kim D.S."/>
            <person name="De Juan-Pardo E."/>
            <person name="Demeyer K."/>
            <person name="Hole K."/>
            <person name="Larrea E."/>
            <person name="Timmerman E."/>
            <person name="Prieto J."/>
            <person name="Arnesen T."/>
            <person name="Sherman F."/>
            <person name="Gevaert K."/>
            <person name="Aldabe R."/>
        </authorList>
    </citation>
    <scope>IDENTIFICATION BY MASS SPECTROMETRY [LARGE SCALE ANALYSIS]</scope>
</reference>
<reference key="10">
    <citation type="journal article" date="2013" name="J. Proteome Res.">
        <title>Toward a comprehensive characterization of a human cancer cell phosphoproteome.</title>
        <authorList>
            <person name="Zhou H."/>
            <person name="Di Palma S."/>
            <person name="Preisinger C."/>
            <person name="Peng M."/>
            <person name="Polat A.N."/>
            <person name="Heck A.J."/>
            <person name="Mohammed S."/>
        </authorList>
    </citation>
    <scope>PHOSPHORYLATION [LARGE SCALE ANALYSIS] AT SER-4</scope>
    <scope>IDENTIFICATION BY MASS SPECTROMETRY [LARGE SCALE ANALYSIS]</scope>
    <source>
        <tissue>Cervix carcinoma</tissue>
    </source>
</reference>
<reference key="11">
    <citation type="journal article" date="2014" name="J. Proteomics">
        <title>An enzyme assisted RP-RPLC approach for in-depth analysis of human liver phosphoproteome.</title>
        <authorList>
            <person name="Bian Y."/>
            <person name="Song C."/>
            <person name="Cheng K."/>
            <person name="Dong M."/>
            <person name="Wang F."/>
            <person name="Huang J."/>
            <person name="Sun D."/>
            <person name="Wang L."/>
            <person name="Ye M."/>
            <person name="Zou H."/>
        </authorList>
    </citation>
    <scope>IDENTIFICATION BY MASS SPECTROMETRY [LARGE SCALE ANALYSIS]</scope>
    <source>
        <tissue>Liver</tissue>
    </source>
</reference>
<reference key="12">
    <citation type="journal article" date="2015" name="Proteomics">
        <title>N-terminome analysis of the human mitochondrial proteome.</title>
        <authorList>
            <person name="Vaca Jacome A.S."/>
            <person name="Rabilloud T."/>
            <person name="Schaeffer-Reiss C."/>
            <person name="Rompais M."/>
            <person name="Ayoub D."/>
            <person name="Lane L."/>
            <person name="Bairoch A."/>
            <person name="Van Dorsselaer A."/>
            <person name="Carapito C."/>
        </authorList>
    </citation>
    <scope>IDENTIFICATION BY MASS SPECTROMETRY [LARGE SCALE ANALYSIS]</scope>
</reference>
<reference key="13">
    <citation type="journal article" date="2017" name="Proc. Natl. Acad. Sci. U.S.A.">
        <title>Phytosphingosine degradation pathway includes fatty acid alpha-oxidation reactions in the endoplasmic reticulum.</title>
        <authorList>
            <person name="Kitamura T."/>
            <person name="Seki N."/>
            <person name="Kihara A."/>
        </authorList>
    </citation>
    <scope>SUBCELLULAR LOCATION</scope>
    <scope>CATALYTIC ACTIVITY</scope>
    <scope>FUNCTION</scope>
    <scope>TISSUE SPECIFICITY</scope>
</reference>
<sequence>MPDSNFAERSEEQVSGAKVIAQALKTQDVEYIFGIVGIPVTEIAIAAQQLGIKYIGMRNEQAACYAASAIGYLTSRPGVCLVVSGPGLIHALGGMANANMNCWPLLVIGGSSERNQETMGAFQEFPQVEACRLYTKFSARPSSIEAIPFVIEKAVRSSIYGRPGACYVDIPADFVNLQVNVNSIKYMERCMSPPISMAETSAVCTAASVIRNAKQPLLIIGKGAAYAHAEESIKKLVEQYKLPFLPTPMGKGVVPDNHPYCVGAARSRALQFADVIVLFGARLNWILHFGLPPRYQPDVKFIQVDICAEELGNNVKPAVTLLGNIHAVTKQLLEELDKTPWQYPPESKWWKTLREKMKSNEAASKELASKKSLPMNYYTVFYHVQEQLPRDCFVVSEGANTMDIGRTVLQNYLPRHRLDAGTFGTMGVGLGFAIAAAVVAKDRSPGQWIICVEGDSAFGFSGMEVETICRYNLPIILLVVNNNGIYQGFDTDTWKEMLKFQDATAVVPPMCLLPNSHYEQVMTAFGGKGYFVQTPEELQKSLRQSLADTTKPSLINIMIEPQATRKAQDFHWLTRSNM</sequence>
<dbReference type="EC" id="4.1.2.63" evidence="4 5 6"/>
<dbReference type="EMBL" id="AJ131753">
    <property type="protein sequence ID" value="CAB60200.1"/>
    <property type="molecule type" value="mRNA"/>
</dbReference>
<dbReference type="EMBL" id="AF161397">
    <property type="protein sequence ID" value="AAF28957.1"/>
    <property type="status" value="ALT_INIT"/>
    <property type="molecule type" value="mRNA"/>
</dbReference>
<dbReference type="EMBL" id="AK301546">
    <property type="protein sequence ID" value="BAG63043.1"/>
    <property type="molecule type" value="mRNA"/>
</dbReference>
<dbReference type="EMBL" id="AK301990">
    <property type="protein sequence ID" value="BAG63397.1"/>
    <property type="molecule type" value="mRNA"/>
</dbReference>
<dbReference type="EMBL" id="AC027129">
    <property type="status" value="NOT_ANNOTATED_CDS"/>
    <property type="molecule type" value="Genomic_DNA"/>
</dbReference>
<dbReference type="EMBL" id="BC001627">
    <property type="protein sequence ID" value="AAH01627.1"/>
    <property type="molecule type" value="mRNA"/>
</dbReference>
<dbReference type="CCDS" id="CCDS2627.1">
    <molecule id="Q9UJ83-1"/>
</dbReference>
<dbReference type="CCDS" id="CCDS68360.1">
    <molecule id="Q9UJ83-2"/>
</dbReference>
<dbReference type="CCDS" id="CCDS68361.1">
    <molecule id="Q9UJ83-3"/>
</dbReference>
<dbReference type="CCDS" id="CCDS68362.1">
    <molecule id="Q9UJ83-4"/>
</dbReference>
<dbReference type="RefSeq" id="NP_001271342.1">
    <molecule id="Q9UJ83-2"/>
    <property type="nucleotide sequence ID" value="NM_001284413.2"/>
</dbReference>
<dbReference type="RefSeq" id="NP_001271344.1">
    <molecule id="Q9UJ83-4"/>
    <property type="nucleotide sequence ID" value="NM_001284415.2"/>
</dbReference>
<dbReference type="RefSeq" id="NP_001271345.1">
    <molecule id="Q9UJ83-3"/>
    <property type="nucleotide sequence ID" value="NM_001284416.2"/>
</dbReference>
<dbReference type="RefSeq" id="NP_036392.2">
    <molecule id="Q9UJ83-1"/>
    <property type="nucleotide sequence ID" value="NM_012260.4"/>
</dbReference>
<dbReference type="SMR" id="Q9UJ83"/>
<dbReference type="BioGRID" id="117523">
    <property type="interactions" value="26"/>
</dbReference>
<dbReference type="FunCoup" id="Q9UJ83">
    <property type="interactions" value="2285"/>
</dbReference>
<dbReference type="IntAct" id="Q9UJ83">
    <property type="interactions" value="10"/>
</dbReference>
<dbReference type="MINT" id="Q9UJ83"/>
<dbReference type="STRING" id="9606.ENSP00000323811"/>
<dbReference type="SwissLipids" id="SLP:000001015"/>
<dbReference type="GlyGen" id="Q9UJ83">
    <property type="glycosylation" value="1 site, 1 O-linked glycan (1 site)"/>
</dbReference>
<dbReference type="iPTMnet" id="Q9UJ83"/>
<dbReference type="MetOSite" id="Q9UJ83"/>
<dbReference type="PhosphoSitePlus" id="Q9UJ83"/>
<dbReference type="SwissPalm" id="Q9UJ83"/>
<dbReference type="BioMuta" id="HACL1"/>
<dbReference type="DMDM" id="20455027"/>
<dbReference type="jPOST" id="Q9UJ83"/>
<dbReference type="MassIVE" id="Q9UJ83"/>
<dbReference type="PaxDb" id="9606-ENSP00000323811"/>
<dbReference type="PeptideAtlas" id="Q9UJ83"/>
<dbReference type="ProteomicsDB" id="19929"/>
<dbReference type="ProteomicsDB" id="5341"/>
<dbReference type="ProteomicsDB" id="5439"/>
<dbReference type="ProteomicsDB" id="84601">
    <molecule id="Q9UJ83-1"/>
</dbReference>
<dbReference type="Pumba" id="Q9UJ83"/>
<dbReference type="Antibodypedia" id="26826">
    <property type="antibodies" value="196 antibodies from 28 providers"/>
</dbReference>
<dbReference type="DNASU" id="26061"/>
<dbReference type="Ensembl" id="ENST00000321169.10">
    <molecule id="Q9UJ83-1"/>
    <property type="protein sequence ID" value="ENSP00000323811.5"/>
    <property type="gene ID" value="ENSG00000131373.15"/>
</dbReference>
<dbReference type="Ensembl" id="ENST00000451445.6">
    <molecule id="Q9UJ83-3"/>
    <property type="protein sequence ID" value="ENSP00000403656.2"/>
    <property type="gene ID" value="ENSG00000131373.15"/>
</dbReference>
<dbReference type="Ensembl" id="ENST00000456194.6">
    <molecule id="Q9UJ83-2"/>
    <property type="protein sequence ID" value="ENSP00000390699.2"/>
    <property type="gene ID" value="ENSG00000131373.15"/>
</dbReference>
<dbReference type="Ensembl" id="ENST00000457447.6">
    <molecule id="Q9UJ83-4"/>
    <property type="protein sequence ID" value="ENSP00000404883.2"/>
    <property type="gene ID" value="ENSG00000131373.15"/>
</dbReference>
<dbReference type="GeneID" id="26061"/>
<dbReference type="KEGG" id="hsa:26061"/>
<dbReference type="MANE-Select" id="ENST00000321169.10">
    <property type="protein sequence ID" value="ENSP00000323811.5"/>
    <property type="RefSeq nucleotide sequence ID" value="NM_012260.4"/>
    <property type="RefSeq protein sequence ID" value="NP_036392.2"/>
</dbReference>
<dbReference type="UCSC" id="uc003caf.5">
    <molecule id="Q9UJ83-1"/>
    <property type="organism name" value="human"/>
</dbReference>
<dbReference type="AGR" id="HGNC:17856"/>
<dbReference type="CTD" id="26061"/>
<dbReference type="DisGeNET" id="26061"/>
<dbReference type="GeneCards" id="HACL1"/>
<dbReference type="HGNC" id="HGNC:17856">
    <property type="gene designation" value="HACL1"/>
</dbReference>
<dbReference type="HPA" id="ENSG00000131373">
    <property type="expression patterns" value="Low tissue specificity"/>
</dbReference>
<dbReference type="MalaCards" id="HACL1"/>
<dbReference type="MIM" id="604300">
    <property type="type" value="gene"/>
</dbReference>
<dbReference type="neXtProt" id="NX_Q9UJ83"/>
<dbReference type="OpenTargets" id="ENSG00000131373"/>
<dbReference type="PharmGKB" id="PA142671172"/>
<dbReference type="VEuPathDB" id="HostDB:ENSG00000131373"/>
<dbReference type="eggNOG" id="KOG1185">
    <property type="taxonomic scope" value="Eukaryota"/>
</dbReference>
<dbReference type="GeneTree" id="ENSGT00940000156802"/>
<dbReference type="HOGENOM" id="CLU_013748_3_3_1"/>
<dbReference type="InParanoid" id="Q9UJ83"/>
<dbReference type="OMA" id="YMGMIGM"/>
<dbReference type="OrthoDB" id="10006023at2759"/>
<dbReference type="PAN-GO" id="Q9UJ83">
    <property type="GO annotations" value="3 GO annotations based on evolutionary models"/>
</dbReference>
<dbReference type="PhylomeDB" id="Q9UJ83"/>
<dbReference type="TreeFam" id="TF105690"/>
<dbReference type="BioCyc" id="MetaCyc:HS05516-MONOMER"/>
<dbReference type="BRENDA" id="4.1.2.63">
    <property type="organism ID" value="2681"/>
</dbReference>
<dbReference type="PathwayCommons" id="Q9UJ83"/>
<dbReference type="Reactome" id="R-HSA-389599">
    <property type="pathway name" value="Alpha-oxidation of phytanate"/>
</dbReference>
<dbReference type="Reactome" id="R-HSA-9033241">
    <property type="pathway name" value="Peroxisomal protein import"/>
</dbReference>
<dbReference type="SignaLink" id="Q9UJ83"/>
<dbReference type="UniPathway" id="UPA00199"/>
<dbReference type="BioGRID-ORCS" id="26061">
    <property type="hits" value="10 hits in 1151 CRISPR screens"/>
</dbReference>
<dbReference type="ChiTaRS" id="HACL1">
    <property type="organism name" value="human"/>
</dbReference>
<dbReference type="GenomeRNAi" id="26061"/>
<dbReference type="Pharos" id="Q9UJ83">
    <property type="development level" value="Tbio"/>
</dbReference>
<dbReference type="PRO" id="PR:Q9UJ83"/>
<dbReference type="Proteomes" id="UP000005640">
    <property type="component" value="Chromosome 3"/>
</dbReference>
<dbReference type="RNAct" id="Q9UJ83">
    <property type="molecule type" value="protein"/>
</dbReference>
<dbReference type="Bgee" id="ENSG00000131373">
    <property type="expression patterns" value="Expressed in jejunal mucosa and 175 other cell types or tissues"/>
</dbReference>
<dbReference type="ExpressionAtlas" id="Q9UJ83">
    <property type="expression patterns" value="baseline and differential"/>
</dbReference>
<dbReference type="GO" id="GO:0005829">
    <property type="term" value="C:cytosol"/>
    <property type="evidence" value="ECO:0000304"/>
    <property type="project" value="Reactome"/>
</dbReference>
<dbReference type="GO" id="GO:0043231">
    <property type="term" value="C:intracellular membrane-bounded organelle"/>
    <property type="evidence" value="ECO:0000314"/>
    <property type="project" value="HPA"/>
</dbReference>
<dbReference type="GO" id="GO:0005654">
    <property type="term" value="C:nucleoplasm"/>
    <property type="evidence" value="ECO:0000314"/>
    <property type="project" value="HPA"/>
</dbReference>
<dbReference type="GO" id="GO:0005782">
    <property type="term" value="C:peroxisomal matrix"/>
    <property type="evidence" value="ECO:0000304"/>
    <property type="project" value="Reactome"/>
</dbReference>
<dbReference type="GO" id="GO:0005777">
    <property type="term" value="C:peroxisome"/>
    <property type="evidence" value="ECO:0000314"/>
    <property type="project" value="UniProtKB"/>
</dbReference>
<dbReference type="GO" id="GO:0106359">
    <property type="term" value="F:2-hydroxyacyl-CoA lyase activity"/>
    <property type="evidence" value="ECO:0000315"/>
    <property type="project" value="UniProtKB"/>
</dbReference>
<dbReference type="GO" id="GO:0106376">
    <property type="term" value="F:2-hydroxyphytanoyl-CoA lyase activity"/>
    <property type="evidence" value="ECO:0007669"/>
    <property type="project" value="RHEA"/>
</dbReference>
<dbReference type="GO" id="GO:0005524">
    <property type="term" value="F:ATP binding"/>
    <property type="evidence" value="ECO:0000314"/>
    <property type="project" value="UniProtKB"/>
</dbReference>
<dbReference type="GO" id="GO:0016830">
    <property type="term" value="F:carbon-carbon lyase activity"/>
    <property type="evidence" value="ECO:0000314"/>
    <property type="project" value="UniProtKB"/>
</dbReference>
<dbReference type="GO" id="GO:0042802">
    <property type="term" value="F:identical protein binding"/>
    <property type="evidence" value="ECO:0000353"/>
    <property type="project" value="UniProtKB"/>
</dbReference>
<dbReference type="GO" id="GO:0000287">
    <property type="term" value="F:magnesium ion binding"/>
    <property type="evidence" value="ECO:0000314"/>
    <property type="project" value="UniProtKB"/>
</dbReference>
<dbReference type="GO" id="GO:0030976">
    <property type="term" value="F:thiamine pyrophosphate binding"/>
    <property type="evidence" value="ECO:0000314"/>
    <property type="project" value="HGNC-UCL"/>
</dbReference>
<dbReference type="GO" id="GO:0001561">
    <property type="term" value="P:fatty acid alpha-oxidation"/>
    <property type="evidence" value="ECO:0000314"/>
    <property type="project" value="UniProtKB"/>
</dbReference>
<dbReference type="GO" id="GO:0006631">
    <property type="term" value="P:fatty acid metabolic process"/>
    <property type="evidence" value="ECO:0000314"/>
    <property type="project" value="UniProtKB"/>
</dbReference>
<dbReference type="GO" id="GO:0097089">
    <property type="term" value="P:methyl-branched fatty acid metabolic process"/>
    <property type="evidence" value="ECO:0000314"/>
    <property type="project" value="UniProtKB"/>
</dbReference>
<dbReference type="GO" id="GO:1903512">
    <property type="term" value="P:phytanic acid metabolic process"/>
    <property type="evidence" value="ECO:0000314"/>
    <property type="project" value="UniProtKB"/>
</dbReference>
<dbReference type="GO" id="GO:0006625">
    <property type="term" value="P:protein targeting to peroxisome"/>
    <property type="evidence" value="ECO:0000315"/>
    <property type="project" value="UniProtKB"/>
</dbReference>
<dbReference type="CDD" id="cd02004">
    <property type="entry name" value="TPP_BZL_OCoD_HPCL"/>
    <property type="match status" value="1"/>
</dbReference>
<dbReference type="CDD" id="cd07035">
    <property type="entry name" value="TPP_PYR_POX_like"/>
    <property type="match status" value="1"/>
</dbReference>
<dbReference type="FunFam" id="3.40.50.1220:FF:000006">
    <property type="entry name" value="2-hydroxyacyl-CoA lyase 1"/>
    <property type="match status" value="1"/>
</dbReference>
<dbReference type="FunFam" id="3.40.50.970:FF:000027">
    <property type="entry name" value="2-hydroxyacyl-CoA lyase 1"/>
    <property type="match status" value="1"/>
</dbReference>
<dbReference type="FunFam" id="3.40.50.970:FF:000038">
    <property type="entry name" value="2-hydroxyacyl-CoA lyase 1 isoform X1"/>
    <property type="match status" value="1"/>
</dbReference>
<dbReference type="Gene3D" id="3.40.50.970">
    <property type="match status" value="2"/>
</dbReference>
<dbReference type="Gene3D" id="3.40.50.1220">
    <property type="entry name" value="TPP-binding domain"/>
    <property type="match status" value="1"/>
</dbReference>
<dbReference type="InterPro" id="IPR029035">
    <property type="entry name" value="DHS-like_NAD/FAD-binding_dom"/>
</dbReference>
<dbReference type="InterPro" id="IPR045025">
    <property type="entry name" value="HACL1-like"/>
</dbReference>
<dbReference type="InterPro" id="IPR029061">
    <property type="entry name" value="THDP-binding"/>
</dbReference>
<dbReference type="InterPro" id="IPR012000">
    <property type="entry name" value="Thiamin_PyroP_enz_cen_dom"/>
</dbReference>
<dbReference type="InterPro" id="IPR012001">
    <property type="entry name" value="Thiamin_PyroP_enz_TPP-bd_dom"/>
</dbReference>
<dbReference type="InterPro" id="IPR011766">
    <property type="entry name" value="TPP_enzyme_TPP-bd"/>
</dbReference>
<dbReference type="NCBIfam" id="NF006721">
    <property type="entry name" value="PRK09259.1"/>
    <property type="match status" value="1"/>
</dbReference>
<dbReference type="PANTHER" id="PTHR43710">
    <property type="entry name" value="2-HYDROXYACYL-COA LYASE"/>
    <property type="match status" value="1"/>
</dbReference>
<dbReference type="PANTHER" id="PTHR43710:SF2">
    <property type="entry name" value="2-HYDROXYACYL-COA LYASE 1"/>
    <property type="match status" value="1"/>
</dbReference>
<dbReference type="Pfam" id="PF02775">
    <property type="entry name" value="TPP_enzyme_C"/>
    <property type="match status" value="1"/>
</dbReference>
<dbReference type="Pfam" id="PF00205">
    <property type="entry name" value="TPP_enzyme_M"/>
    <property type="match status" value="1"/>
</dbReference>
<dbReference type="Pfam" id="PF02776">
    <property type="entry name" value="TPP_enzyme_N"/>
    <property type="match status" value="1"/>
</dbReference>
<dbReference type="SUPFAM" id="SSF52467">
    <property type="entry name" value="DHS-like NAD/FAD-binding domain"/>
    <property type="match status" value="1"/>
</dbReference>
<dbReference type="SUPFAM" id="SSF52518">
    <property type="entry name" value="Thiamin diphosphate-binding fold (THDP-binding)"/>
    <property type="match status" value="2"/>
</dbReference>
<keyword id="KW-0025">Alternative splicing</keyword>
<keyword id="KW-0276">Fatty acid metabolism</keyword>
<keyword id="KW-0443">Lipid metabolism</keyword>
<keyword id="KW-0456">Lyase</keyword>
<keyword id="KW-0460">Magnesium</keyword>
<keyword id="KW-0479">Metal-binding</keyword>
<keyword id="KW-0576">Peroxisome</keyword>
<keyword id="KW-0597">Phosphoprotein</keyword>
<keyword id="KW-1267">Proteomics identification</keyword>
<keyword id="KW-1185">Reference proteome</keyword>
<keyword id="KW-0786">Thiamine pyrophosphate</keyword>
<accession>Q9UJ83</accession>
<accession>B4DWI1</accession>
<accession>B4DXI5</accession>
<accession>E9PEN4</accession>
<accession>Q9BV42</accession>
<accession>Q9P0A2</accession>